<evidence type="ECO:0000256" key="1">
    <source>
        <dbReference type="SAM" id="MobiDB-lite"/>
    </source>
</evidence>
<accession>P70675</accession>
<reference key="1">
    <citation type="journal article" date="1996" name="Hum. Mol. Genet.">
        <title>A 94 kb genomic sequence 3' to the murine Xist gene reveals an AT rich region containing a new testis specific gene Tsx.</title>
        <authorList>
            <person name="Simmler M.-C."/>
            <person name="Cunningham D.B."/>
            <person name="Clerc P."/>
            <person name="Vermat T."/>
            <person name="Caudron B."/>
            <person name="Cruaud C."/>
            <person name="Pawlak A."/>
            <person name="Szpirer C."/>
            <person name="Weissenbach J."/>
            <person name="Claverie J.-M."/>
            <person name="Avner P."/>
        </authorList>
    </citation>
    <scope>NUCLEOTIDE SEQUENCE [GENOMIC DNA / MRNA]</scope>
    <source>
        <strain>129/Sv</strain>
        <tissue>Testis</tissue>
    </source>
</reference>
<reference key="2">
    <citation type="journal article" date="2004" name="Genome Res.">
        <title>The status, quality, and expansion of the NIH full-length cDNA project: the Mammalian Gene Collection (MGC).</title>
        <authorList>
            <consortium name="The MGC Project Team"/>
        </authorList>
    </citation>
    <scope>NUCLEOTIDE SEQUENCE [LARGE SCALE MRNA]</scope>
    <source>
        <tissue>Testis</tissue>
    </source>
</reference>
<reference key="3">
    <citation type="journal article" date="2010" name="Cell">
        <title>A tissue-specific atlas of mouse protein phosphorylation and expression.</title>
        <authorList>
            <person name="Huttlin E.L."/>
            <person name="Jedrychowski M.P."/>
            <person name="Elias J.E."/>
            <person name="Goswami T."/>
            <person name="Rad R."/>
            <person name="Beausoleil S.A."/>
            <person name="Villen J."/>
            <person name="Haas W."/>
            <person name="Sowa M.E."/>
            <person name="Gygi S.P."/>
        </authorList>
    </citation>
    <scope>IDENTIFICATION BY MASS SPECTROMETRY [LARGE SCALE ANALYSIS]</scope>
    <source>
        <tissue>Testis</tissue>
    </source>
</reference>
<feature type="chain" id="PRO_0000065672" description="Testis-specific protein TSX">
    <location>
        <begin position="1"/>
        <end position="144"/>
    </location>
</feature>
<feature type="region of interest" description="Disordered" evidence="1">
    <location>
        <begin position="1"/>
        <end position="21"/>
    </location>
</feature>
<feature type="region of interest" description="Disordered" evidence="1">
    <location>
        <begin position="69"/>
        <end position="99"/>
    </location>
</feature>
<feature type="region of interest" description="Disordered" evidence="1">
    <location>
        <begin position="120"/>
        <end position="144"/>
    </location>
</feature>
<feature type="compositionally biased region" description="Acidic residues" evidence="1">
    <location>
        <begin position="75"/>
        <end position="90"/>
    </location>
</feature>
<organism>
    <name type="scientific">Mus musculus</name>
    <name type="common">Mouse</name>
    <dbReference type="NCBI Taxonomy" id="10090"/>
    <lineage>
        <taxon>Eukaryota</taxon>
        <taxon>Metazoa</taxon>
        <taxon>Chordata</taxon>
        <taxon>Craniata</taxon>
        <taxon>Vertebrata</taxon>
        <taxon>Euteleostomi</taxon>
        <taxon>Mammalia</taxon>
        <taxon>Eutheria</taxon>
        <taxon>Euarchontoglires</taxon>
        <taxon>Glires</taxon>
        <taxon>Rodentia</taxon>
        <taxon>Myomorpha</taxon>
        <taxon>Muroidea</taxon>
        <taxon>Muridae</taxon>
        <taxon>Murinae</taxon>
        <taxon>Mus</taxon>
        <taxon>Mus</taxon>
    </lineage>
</organism>
<protein>
    <recommendedName>
        <fullName>Testis-specific protein TSX</fullName>
    </recommendedName>
</protein>
<gene>
    <name type="primary">Tsx</name>
</gene>
<proteinExistence type="evidence at protein level"/>
<keyword id="KW-1185">Reference proteome</keyword>
<comment type="function">
    <text>May have an RNA/DNA binding role.</text>
</comment>
<comment type="tissue specificity">
    <text>Testis.</text>
</comment>
<dbReference type="EMBL" id="X99946">
    <property type="protein sequence ID" value="CAA68206.1"/>
    <property type="molecule type" value="Genomic_DNA"/>
</dbReference>
<dbReference type="EMBL" id="X99796">
    <property type="protein sequence ID" value="CAA68129.1"/>
    <property type="molecule type" value="mRNA"/>
</dbReference>
<dbReference type="EMBL" id="BC048493">
    <property type="protein sequence ID" value="AAH48493.1"/>
    <property type="molecule type" value="mRNA"/>
</dbReference>
<dbReference type="CCDS" id="CCDS41090.1"/>
<dbReference type="RefSeq" id="NP_001397173.1">
    <property type="nucleotide sequence ID" value="NM_001410244.1"/>
</dbReference>
<dbReference type="RefSeq" id="NP_033466.1">
    <property type="nucleotide sequence ID" value="NM_009440.3"/>
</dbReference>
<dbReference type="RefSeq" id="XP_006528003.1">
    <property type="nucleotide sequence ID" value="XM_006527940.4"/>
</dbReference>
<dbReference type="RefSeq" id="XP_006528004.1">
    <property type="nucleotide sequence ID" value="XM_006527941.2"/>
</dbReference>
<dbReference type="FunCoup" id="P70675">
    <property type="interactions" value="41"/>
</dbReference>
<dbReference type="STRING" id="10090.ENSMUSP00000033691"/>
<dbReference type="PhosphoSitePlus" id="P70675"/>
<dbReference type="SwissPalm" id="P70675"/>
<dbReference type="PaxDb" id="10090-ENSMUSP00000033691"/>
<dbReference type="ProteomicsDB" id="298002"/>
<dbReference type="Ensembl" id="ENSMUST00000033691.5">
    <property type="protein sequence ID" value="ENSMUSP00000033691.5"/>
    <property type="gene ID" value="ENSMUSG00000031329.5"/>
</dbReference>
<dbReference type="GeneID" id="22127"/>
<dbReference type="KEGG" id="mmu:22127"/>
<dbReference type="UCSC" id="uc009tzm.2">
    <property type="organism name" value="mouse"/>
</dbReference>
<dbReference type="AGR" id="MGI:108118"/>
<dbReference type="CTD" id="22127"/>
<dbReference type="MGI" id="MGI:108118">
    <property type="gene designation" value="Tsx"/>
</dbReference>
<dbReference type="VEuPathDB" id="HostDB:ENSMUSG00000031329"/>
<dbReference type="eggNOG" id="ENOG502TCXD">
    <property type="taxonomic scope" value="Eukaryota"/>
</dbReference>
<dbReference type="GeneTree" id="ENSGT00520000061207"/>
<dbReference type="HOGENOM" id="CLU_1795880_0_0_1"/>
<dbReference type="InParanoid" id="P70675"/>
<dbReference type="OMA" id="VTHCILA"/>
<dbReference type="OrthoDB" id="9623553at2759"/>
<dbReference type="TreeFam" id="TF339784"/>
<dbReference type="BioGRID-ORCS" id="22127">
    <property type="hits" value="1 hit in 77 CRISPR screens"/>
</dbReference>
<dbReference type="ChiTaRS" id="Tsx">
    <property type="organism name" value="mouse"/>
</dbReference>
<dbReference type="PRO" id="PR:P70675"/>
<dbReference type="Proteomes" id="UP000000589">
    <property type="component" value="Chromosome X"/>
</dbReference>
<dbReference type="RNAct" id="P70675">
    <property type="molecule type" value="protein"/>
</dbReference>
<dbReference type="Bgee" id="ENSMUSG00000031329">
    <property type="expression patterns" value="Expressed in seminiferous tubule of testis and 28 other cell types or tissues"/>
</dbReference>
<dbReference type="ExpressionAtlas" id="P70675">
    <property type="expression patterns" value="baseline and differential"/>
</dbReference>
<dbReference type="GO" id="GO:0005737">
    <property type="term" value="C:cytoplasm"/>
    <property type="evidence" value="ECO:0000314"/>
    <property type="project" value="MGI"/>
</dbReference>
<dbReference type="GO" id="GO:0001673">
    <property type="term" value="C:male germ cell nucleus"/>
    <property type="evidence" value="ECO:0000314"/>
    <property type="project" value="MGI"/>
</dbReference>
<dbReference type="GO" id="GO:0005634">
    <property type="term" value="C:nucleus"/>
    <property type="evidence" value="ECO:0000314"/>
    <property type="project" value="MGI"/>
</dbReference>
<dbReference type="GO" id="GO:0030534">
    <property type="term" value="P:adult behavior"/>
    <property type="evidence" value="ECO:0000315"/>
    <property type="project" value="MGI"/>
</dbReference>
<dbReference type="GO" id="GO:0009566">
    <property type="term" value="P:fertilization"/>
    <property type="evidence" value="ECO:0000315"/>
    <property type="project" value="MGI"/>
</dbReference>
<dbReference type="GO" id="GO:0008584">
    <property type="term" value="P:male gonad development"/>
    <property type="evidence" value="ECO:0000315"/>
    <property type="project" value="MGI"/>
</dbReference>
<dbReference type="InterPro" id="IPR035352">
    <property type="entry name" value="TSX"/>
</dbReference>
<dbReference type="Pfam" id="PF17397">
    <property type="entry name" value="TSX"/>
    <property type="match status" value="1"/>
</dbReference>
<name>TSX_MOUSE</name>
<sequence>MSEKQSPKTSEAECSAMDLPEFEDEENWLFKVLGFQPGPSSALDDDTDDQADEPLSAAEFLHLQDILQEDRVSSTDDEDTCQAGCTEDDETSHSDRDIDNNVKVITGNIKASPSMYMEMFTDQNPQADQDLEETESDGAMNPTD</sequence>